<proteinExistence type="evidence at protein level"/>
<protein>
    <recommendedName>
        <fullName evidence="2">Small cysteine and glycine repeat-containing protein 9</fullName>
    </recommendedName>
    <alternativeName>
        <fullName evidence="1">Keratin-associated protein 28-1 pseudogene</fullName>
    </alternativeName>
</protein>
<evidence type="ECO:0000303" key="1">
    <source>
    </source>
</evidence>
<evidence type="ECO:0000305" key="2"/>
<evidence type="ECO:0000305" key="3">
    <source>
    </source>
</evidence>
<evidence type="ECO:0000312" key="4">
    <source>
        <dbReference type="HGNC" id="HGNC:34219"/>
    </source>
</evidence>
<accession>P0DSO2</accession>
<reference key="1">
    <citation type="journal article" date="2005" name="Nature">
        <title>Generation and annotation of the DNA sequences of human chromosomes 2 and 4.</title>
        <authorList>
            <person name="Hillier L.W."/>
            <person name="Graves T.A."/>
            <person name="Fulton R.S."/>
            <person name="Fulton L.A."/>
            <person name="Pepin K.H."/>
            <person name="Minx P."/>
            <person name="Wagner-McPherson C."/>
            <person name="Layman D."/>
            <person name="Wylie K."/>
            <person name="Sekhon M."/>
            <person name="Becker M.C."/>
            <person name="Fewell G.A."/>
            <person name="Delehaunty K.D."/>
            <person name="Miner T.L."/>
            <person name="Nash W.E."/>
            <person name="Kremitzki C."/>
            <person name="Oddy L."/>
            <person name="Du H."/>
            <person name="Sun H."/>
            <person name="Bradshaw-Cordum H."/>
            <person name="Ali J."/>
            <person name="Carter J."/>
            <person name="Cordes M."/>
            <person name="Harris A."/>
            <person name="Isak A."/>
            <person name="van Brunt A."/>
            <person name="Nguyen C."/>
            <person name="Du F."/>
            <person name="Courtney L."/>
            <person name="Kalicki J."/>
            <person name="Ozersky P."/>
            <person name="Abbott S."/>
            <person name="Armstrong J."/>
            <person name="Belter E.A."/>
            <person name="Caruso L."/>
            <person name="Cedroni M."/>
            <person name="Cotton M."/>
            <person name="Davidson T."/>
            <person name="Desai A."/>
            <person name="Elliott G."/>
            <person name="Erb T."/>
            <person name="Fronick C."/>
            <person name="Gaige T."/>
            <person name="Haakenson W."/>
            <person name="Haglund K."/>
            <person name="Holmes A."/>
            <person name="Harkins R."/>
            <person name="Kim K."/>
            <person name="Kruchowski S.S."/>
            <person name="Strong C.M."/>
            <person name="Grewal N."/>
            <person name="Goyea E."/>
            <person name="Hou S."/>
            <person name="Levy A."/>
            <person name="Martinka S."/>
            <person name="Mead K."/>
            <person name="McLellan M.D."/>
            <person name="Meyer R."/>
            <person name="Randall-Maher J."/>
            <person name="Tomlinson C."/>
            <person name="Dauphin-Kohlberg S."/>
            <person name="Kozlowicz-Reilly A."/>
            <person name="Shah N."/>
            <person name="Swearengen-Shahid S."/>
            <person name="Snider J."/>
            <person name="Strong J.T."/>
            <person name="Thompson J."/>
            <person name="Yoakum M."/>
            <person name="Leonard S."/>
            <person name="Pearman C."/>
            <person name="Trani L."/>
            <person name="Radionenko M."/>
            <person name="Waligorski J.E."/>
            <person name="Wang C."/>
            <person name="Rock S.M."/>
            <person name="Tin-Wollam A.-M."/>
            <person name="Maupin R."/>
            <person name="Latreille P."/>
            <person name="Wendl M.C."/>
            <person name="Yang S.-P."/>
            <person name="Pohl C."/>
            <person name="Wallis J.W."/>
            <person name="Spieth J."/>
            <person name="Bieri T.A."/>
            <person name="Berkowicz N."/>
            <person name="Nelson J.O."/>
            <person name="Osborne J."/>
            <person name="Ding L."/>
            <person name="Meyer R."/>
            <person name="Sabo A."/>
            <person name="Shotland Y."/>
            <person name="Sinha P."/>
            <person name="Wohldmann P.E."/>
            <person name="Cook L.L."/>
            <person name="Hickenbotham M.T."/>
            <person name="Eldred J."/>
            <person name="Williams D."/>
            <person name="Jones T.A."/>
            <person name="She X."/>
            <person name="Ciccarelli F.D."/>
            <person name="Izaurralde E."/>
            <person name="Taylor J."/>
            <person name="Schmutz J."/>
            <person name="Myers R.M."/>
            <person name="Cox D.R."/>
            <person name="Huang X."/>
            <person name="McPherson J.D."/>
            <person name="Mardis E.R."/>
            <person name="Clifton S.W."/>
            <person name="Warren W.C."/>
            <person name="Chinwalla A.T."/>
            <person name="Eddy S.R."/>
            <person name="Marra M.A."/>
            <person name="Ovcharenko I."/>
            <person name="Furey T.S."/>
            <person name="Miller W."/>
            <person name="Eichler E.E."/>
            <person name="Bork P."/>
            <person name="Suyama M."/>
            <person name="Torrents D."/>
            <person name="Waterston R.H."/>
            <person name="Wilson R.K."/>
        </authorList>
    </citation>
    <scope>NUCLEOTIDE SEQUENCE [LARGE SCALE GENOMIC DNA]</scope>
</reference>
<reference key="2">
    <citation type="journal article" date="2008" name="BMC Evol. Biol.">
        <title>Molecular evolution of the keratin associated protein gene family in mammals, role in the evolution of mammalian hair.</title>
        <authorList>
            <person name="Wu D.D."/>
            <person name="Irwin D.M."/>
            <person name="Zhang Y.P."/>
        </authorList>
    </citation>
    <scope>FAMILY CHARACTERIZATION</scope>
</reference>
<feature type="chain" id="PRO_0000450447" description="Small cysteine and glycine repeat-containing protein 9">
    <location>
        <begin position="1"/>
        <end position="92"/>
    </location>
</feature>
<feature type="region of interest" description="11 X 2 AA repeats of CG">
    <location>
        <begin position="4"/>
        <end position="72"/>
    </location>
</feature>
<feature type="sequence variant" id="VAR_083574" description="In dbSNP:rs887960028.">
    <location>
        <begin position="15"/>
        <end position="92"/>
    </location>
</feature>
<organism>
    <name type="scientific">Homo sapiens</name>
    <name type="common">Human</name>
    <dbReference type="NCBI Taxonomy" id="9606"/>
    <lineage>
        <taxon>Eukaryota</taxon>
        <taxon>Metazoa</taxon>
        <taxon>Chordata</taxon>
        <taxon>Craniata</taxon>
        <taxon>Vertebrata</taxon>
        <taxon>Euteleostomi</taxon>
        <taxon>Mammalia</taxon>
        <taxon>Eutheria</taxon>
        <taxon>Euarchontoglires</taxon>
        <taxon>Primates</taxon>
        <taxon>Haplorrhini</taxon>
        <taxon>Catarrhini</taxon>
        <taxon>Hominidae</taxon>
        <taxon>Homo</taxon>
    </lineage>
</organism>
<keyword id="KW-0416">Keratin</keyword>
<keyword id="KW-1185">Reference proteome</keyword>
<keyword id="KW-0677">Repeat</keyword>
<sequence>MGCCGCGSCGCSGGCGGGCGGGCGGGCGSCTTCRCYRVGCCSSCCPCCRGCCGGCCSTPVICCCRRTCSSCGCGCGKGCCQQKSCCQKQCCC</sequence>
<comment type="function">
    <text evidence="2">In the hair cortex, hair keratin intermediate filaments are embedded in an interfilamentous matrix, consisting of hair keratin-associated proteins (KRTAP), which are essential for the formation of a rigid and resistant hair shaft through their extensive disulfide bond cross-linking with abundant cysteine residues of hair keratins. The matrix proteins include the high-sulfur and high-glycine-tyrosine keratins.</text>
</comment>
<comment type="polymorphism">
    <text evidence="2">The most frequent variant has a stop codon instead of Cys-15, giving rise to a truncated protein and is represented on the reference genome assembly (GRCh38/hg38). The variant Cys-15 is rare, except in some populations from Africa and non-Finnish Europa. The sequence shown is rare and is not represented on the reference genome assembly (GRCh38/hg38).</text>
</comment>
<comment type="miscellaneous">
    <text evidence="1">Human have a similar number of genes as other primates despite the relative hairlessness of humans.</text>
</comment>
<comment type="similarity">
    <text evidence="3">Belongs to the KRTAP type 28 family.</text>
</comment>
<gene>
    <name evidence="4" type="primary">SCYGR9</name>
    <name evidence="1" type="synonym">KRTAP28p1</name>
</gene>
<dbReference type="EMBL" id="AC064853">
    <property type="status" value="NOT_ANNOTATED_CDS"/>
    <property type="molecule type" value="Genomic_DNA"/>
</dbReference>
<dbReference type="MassIVE" id="P0DSO2"/>
<dbReference type="PeptideAtlas" id="P0DSO2"/>
<dbReference type="AGR" id="HGNC:34219"/>
<dbReference type="GeneCards" id="SCYGR9"/>
<dbReference type="HGNC" id="HGNC:34219">
    <property type="gene designation" value="SCYGR9"/>
</dbReference>
<dbReference type="neXtProt" id="NX_P0DSO2"/>
<dbReference type="InParanoid" id="P0DSO2"/>
<dbReference type="PRO" id="PR:P0DSO2"/>
<dbReference type="Proteomes" id="UP000005640">
    <property type="component" value="Unplaced"/>
</dbReference>
<dbReference type="GO" id="GO:0005882">
    <property type="term" value="C:intermediate filament"/>
    <property type="evidence" value="ECO:0007669"/>
    <property type="project" value="UniProtKB-KW"/>
</dbReference>
<name>SCGR9_HUMAN</name>